<dbReference type="EMBL" id="CP000948">
    <property type="protein sequence ID" value="ACB02542.1"/>
    <property type="molecule type" value="Genomic_DNA"/>
</dbReference>
<dbReference type="RefSeq" id="WP_000138728.1">
    <property type="nucleotide sequence ID" value="NC_010473.1"/>
</dbReference>
<dbReference type="SMR" id="B1XCF0"/>
<dbReference type="KEGG" id="ecd:ECDH10B_1441"/>
<dbReference type="HOGENOM" id="CLU_057693_2_0_6"/>
<dbReference type="GO" id="GO:0005886">
    <property type="term" value="C:plasma membrane"/>
    <property type="evidence" value="ECO:0007669"/>
    <property type="project" value="UniProtKB-SubCell"/>
</dbReference>
<dbReference type="HAMAP" id="MF_01085">
    <property type="entry name" value="UPF0283"/>
    <property type="match status" value="1"/>
</dbReference>
<dbReference type="InterPro" id="IPR021147">
    <property type="entry name" value="DUF697"/>
</dbReference>
<dbReference type="InterPro" id="IPR006507">
    <property type="entry name" value="UPF0283"/>
</dbReference>
<dbReference type="NCBIfam" id="TIGR01620">
    <property type="entry name" value="hyp_HI0043"/>
    <property type="match status" value="1"/>
</dbReference>
<dbReference type="PANTHER" id="PTHR39342">
    <property type="entry name" value="UPF0283 MEMBRANE PROTEIN YCJF"/>
    <property type="match status" value="1"/>
</dbReference>
<dbReference type="PANTHER" id="PTHR39342:SF1">
    <property type="entry name" value="UPF0283 MEMBRANE PROTEIN YCJF"/>
    <property type="match status" value="1"/>
</dbReference>
<dbReference type="Pfam" id="PF05128">
    <property type="entry name" value="DUF697"/>
    <property type="match status" value="1"/>
</dbReference>
<evidence type="ECO:0000255" key="1">
    <source>
        <dbReference type="HAMAP-Rule" id="MF_01085"/>
    </source>
</evidence>
<organism>
    <name type="scientific">Escherichia coli (strain K12 / DH10B)</name>
    <dbReference type="NCBI Taxonomy" id="316385"/>
    <lineage>
        <taxon>Bacteria</taxon>
        <taxon>Pseudomonadati</taxon>
        <taxon>Pseudomonadota</taxon>
        <taxon>Gammaproteobacteria</taxon>
        <taxon>Enterobacterales</taxon>
        <taxon>Enterobacteriaceae</taxon>
        <taxon>Escherichia</taxon>
    </lineage>
</organism>
<feature type="chain" id="PRO_1000136884" description="UPF0283 membrane protein YcjF">
    <location>
        <begin position="1"/>
        <end position="353"/>
    </location>
</feature>
<feature type="transmembrane region" description="Helical" evidence="1">
    <location>
        <begin position="70"/>
        <end position="90"/>
    </location>
</feature>
<feature type="transmembrane region" description="Helical" evidence="1">
    <location>
        <begin position="100"/>
        <end position="120"/>
    </location>
</feature>
<feature type="transmembrane region" description="Helical" evidence="1">
    <location>
        <begin position="213"/>
        <end position="233"/>
    </location>
</feature>
<sequence>MTEPLKPRIDFDGPLEVDQNPKFRAQQTFDENQAQNFAPATLDEAQEEEGQVEAVMDAALRPKRSLWRKMVMGGLALFGASVVGQGVQWTMNAWQTQDWVALGGCAAGALIIGAGVGSVVTEWRRLWRLRQRAHERDEARDLLHSHGTGKGRAFCEKLAQQAGIDQSHPALQRWYASIHETQNDREVVSLYAHLVQPVLDAQARREISRSAAESTLMIAVSPLALVDMAFIAWRNLRLINRIATLYGIELGYYSRLRLFKLVLLNIAFAGASELVREVGMDWMSQDLAARLSTRAAQGIGAGLLTARLGIKAMELCRPLPWIDDDKPRLGDFRRQLIGQVKETLQKGKTPSEK</sequence>
<name>YCJF_ECODH</name>
<accession>B1XCF0</accession>
<keyword id="KW-0997">Cell inner membrane</keyword>
<keyword id="KW-1003">Cell membrane</keyword>
<keyword id="KW-0472">Membrane</keyword>
<keyword id="KW-0812">Transmembrane</keyword>
<keyword id="KW-1133">Transmembrane helix</keyword>
<comment type="subcellular location">
    <subcellularLocation>
        <location evidence="1">Cell inner membrane</location>
        <topology evidence="1">Multi-pass membrane protein</topology>
    </subcellularLocation>
</comment>
<comment type="similarity">
    <text evidence="1">Belongs to the UPF0283 family.</text>
</comment>
<proteinExistence type="inferred from homology"/>
<reference key="1">
    <citation type="journal article" date="2008" name="J. Bacteriol.">
        <title>The complete genome sequence of Escherichia coli DH10B: insights into the biology of a laboratory workhorse.</title>
        <authorList>
            <person name="Durfee T."/>
            <person name="Nelson R."/>
            <person name="Baldwin S."/>
            <person name="Plunkett G. III"/>
            <person name="Burland V."/>
            <person name="Mau B."/>
            <person name="Petrosino J.F."/>
            <person name="Qin X."/>
            <person name="Muzny D.M."/>
            <person name="Ayele M."/>
            <person name="Gibbs R.A."/>
            <person name="Csorgo B."/>
            <person name="Posfai G."/>
            <person name="Weinstock G.M."/>
            <person name="Blattner F.R."/>
        </authorList>
    </citation>
    <scope>NUCLEOTIDE SEQUENCE [LARGE SCALE GENOMIC DNA]</scope>
    <source>
        <strain>K12 / DH10B</strain>
    </source>
</reference>
<protein>
    <recommendedName>
        <fullName evidence="1">UPF0283 membrane protein YcjF</fullName>
    </recommendedName>
</protein>
<gene>
    <name evidence="1" type="primary">ycjF</name>
    <name type="ordered locus">ECDH10B_1441</name>
</gene>